<reference key="1">
    <citation type="journal article" date="2004" name="Gene">
        <title>Tau gene (MAPT) sequence variation among primates.</title>
        <authorList>
            <person name="Holzer M."/>
            <person name="Craxton M."/>
            <person name="Jakes R."/>
            <person name="Arendt T."/>
            <person name="Goedert M."/>
        </authorList>
    </citation>
    <scope>NUCLEOTIDE SEQUENCE [GENOMIC DNA]</scope>
</reference>
<sequence length="758" mass="78905">MAEPHQEFDVTEDHAGTYGLGDRKDQGGYTMLQDQEGDTDAGLKESPLQTPAEDGSEEPGSETSDAKSTPTAEDVTAPLVDERAPGEQAAAQPHMEIPXGTTAEEAGIGDTPSLEDEAAGHVTQEPESGKVVREGFLGEPGPPGLSHQLVSGMPGAPLLPEGPREATRQPSGIGPEDTEGGRHAPELLKHQLLGDLHQEGPPLKGAGGKERPGSKEEVDEDRDVDESSPQDSPPSKVSPAQDGWPPQAAAREATSIPGFPAEGAIPLPVDFLSKVSTEIPASEPDRPSAGGAEGQDAPPEFTFHVEITPNVQKEQAHSEEHLRRAAFPGAPGEGPEAQGPSLGEDAKEADLPEPSEKQPAAAPRGKPISRVPQLKARMVSKSKDGTGSDDKKAKTSTRSSAKTLKNRPCLSPKHPTPGSSDPLIQPSSPAVCPEPPSSPKYVSSVTPRTGSSGAKEMKLKGADGKTKIATPRGAAPPGQKGQANATRIPAKTPPAPKTPPSSGEPPKSGDRSGYSSPGSPGTPGSRSRTPSLPTPPTREPKKVAVVRTPPKSPSSAKSRLQTAPVPMPDLKNVKSKIGSTENLKHQPGGGKVQIINKKLDLSNVQSKCGSKDNIKHVPGGGSVQIVYKPVDLSKVTSKCGSLGNIHHKPGGGQVEVKSEKLDFKDRVQSKIGSLDNITHVPGGGHKKIETHKLTFRENAKAKTDHGAEIVYKSPVVSGDTSPRHLSNVSSTGSIDMVDSPQLATLADEVSASLAKQGL</sequence>
<name>TAU_PONPY</name>
<dbReference type="EMBL" id="AY769109">
    <property type="protein sequence ID" value="AAV52386.1"/>
    <property type="molecule type" value="Genomic_DNA"/>
</dbReference>
<dbReference type="EMBL" id="AY769097">
    <property type="protein sequence ID" value="AAV52386.1"/>
    <property type="status" value="JOINED"/>
    <property type="molecule type" value="Genomic_DNA"/>
</dbReference>
<dbReference type="EMBL" id="AY769098">
    <property type="protein sequence ID" value="AAV52386.1"/>
    <property type="status" value="JOINED"/>
    <property type="molecule type" value="Genomic_DNA"/>
</dbReference>
<dbReference type="EMBL" id="AY769099">
    <property type="protein sequence ID" value="AAV52386.1"/>
    <property type="status" value="JOINED"/>
    <property type="molecule type" value="Genomic_DNA"/>
</dbReference>
<dbReference type="EMBL" id="AY769102">
    <property type="protein sequence ID" value="AAV52386.1"/>
    <property type="status" value="JOINED"/>
    <property type="molecule type" value="Genomic_DNA"/>
</dbReference>
<dbReference type="EMBL" id="AY769101">
    <property type="protein sequence ID" value="AAV52386.1"/>
    <property type="status" value="JOINED"/>
    <property type="molecule type" value="Genomic_DNA"/>
</dbReference>
<dbReference type="EMBL" id="AY769100">
    <property type="protein sequence ID" value="AAV52386.1"/>
    <property type="status" value="JOINED"/>
    <property type="molecule type" value="Genomic_DNA"/>
</dbReference>
<dbReference type="EMBL" id="AY769103">
    <property type="protein sequence ID" value="AAV52386.1"/>
    <property type="status" value="JOINED"/>
    <property type="molecule type" value="Genomic_DNA"/>
</dbReference>
<dbReference type="EMBL" id="AY769105">
    <property type="protein sequence ID" value="AAV52386.1"/>
    <property type="status" value="JOINED"/>
    <property type="molecule type" value="Genomic_DNA"/>
</dbReference>
<dbReference type="EMBL" id="AY769107">
    <property type="protein sequence ID" value="AAV52386.1"/>
    <property type="status" value="JOINED"/>
    <property type="molecule type" value="Genomic_DNA"/>
</dbReference>
<dbReference type="EMBL" id="AY769108">
    <property type="protein sequence ID" value="AAV52386.1"/>
    <property type="status" value="JOINED"/>
    <property type="molecule type" value="Genomic_DNA"/>
</dbReference>
<dbReference type="EMBL" id="AY769106">
    <property type="protein sequence ID" value="AAV52386.1"/>
    <property type="status" value="JOINED"/>
    <property type="molecule type" value="Genomic_DNA"/>
</dbReference>
<dbReference type="EMBL" id="AY769104">
    <property type="protein sequence ID" value="AAV52386.1"/>
    <property type="status" value="JOINED"/>
    <property type="molecule type" value="Genomic_DNA"/>
</dbReference>
<dbReference type="BMRB" id="Q5S6V2"/>
<dbReference type="GO" id="GO:0030424">
    <property type="term" value="C:axon"/>
    <property type="evidence" value="ECO:0000250"/>
    <property type="project" value="UniProtKB"/>
</dbReference>
<dbReference type="GO" id="GO:0005737">
    <property type="term" value="C:cytoplasm"/>
    <property type="evidence" value="ECO:0000250"/>
    <property type="project" value="UniProtKB"/>
</dbReference>
<dbReference type="GO" id="GO:0005829">
    <property type="term" value="C:cytosol"/>
    <property type="evidence" value="ECO:0007669"/>
    <property type="project" value="UniProtKB-SubCell"/>
</dbReference>
<dbReference type="GO" id="GO:0030425">
    <property type="term" value="C:dendrite"/>
    <property type="evidence" value="ECO:0000250"/>
    <property type="project" value="UniProtKB"/>
</dbReference>
<dbReference type="GO" id="GO:0030426">
    <property type="term" value="C:growth cone"/>
    <property type="evidence" value="ECO:0000250"/>
    <property type="project" value="UniProtKB"/>
</dbReference>
<dbReference type="GO" id="GO:0005874">
    <property type="term" value="C:microtubule"/>
    <property type="evidence" value="ECO:0007669"/>
    <property type="project" value="UniProtKB-KW"/>
</dbReference>
<dbReference type="GO" id="GO:0005886">
    <property type="term" value="C:plasma membrane"/>
    <property type="evidence" value="ECO:0000250"/>
    <property type="project" value="UniProtKB"/>
</dbReference>
<dbReference type="GO" id="GO:0045298">
    <property type="term" value="C:tubulin complex"/>
    <property type="evidence" value="ECO:0000250"/>
    <property type="project" value="UniProtKB"/>
</dbReference>
<dbReference type="GO" id="GO:0008017">
    <property type="term" value="F:microtubule binding"/>
    <property type="evidence" value="ECO:0000250"/>
    <property type="project" value="UniProtKB"/>
</dbReference>
<dbReference type="GO" id="GO:0000226">
    <property type="term" value="P:microtubule cytoskeleton organization"/>
    <property type="evidence" value="ECO:0000250"/>
    <property type="project" value="UniProtKB"/>
</dbReference>
<dbReference type="GO" id="GO:0031175">
    <property type="term" value="P:neuron projection development"/>
    <property type="evidence" value="ECO:0007669"/>
    <property type="project" value="TreeGrafter"/>
</dbReference>
<dbReference type="GO" id="GO:0045773">
    <property type="term" value="P:positive regulation of axon extension"/>
    <property type="evidence" value="ECO:0000250"/>
    <property type="project" value="UniProtKB"/>
</dbReference>
<dbReference type="GO" id="GO:0031116">
    <property type="term" value="P:positive regulation of microtubule polymerization"/>
    <property type="evidence" value="ECO:0000250"/>
    <property type="project" value="UniProtKB"/>
</dbReference>
<dbReference type="InterPro" id="IPR027324">
    <property type="entry name" value="MAP2/MAP4/Tau"/>
</dbReference>
<dbReference type="InterPro" id="IPR001084">
    <property type="entry name" value="MAP_tubulin-bd_rpt"/>
</dbReference>
<dbReference type="InterPro" id="IPR002955">
    <property type="entry name" value="Tau"/>
</dbReference>
<dbReference type="PANTHER" id="PTHR11501">
    <property type="entry name" value="MICROTUBULE-ASSOCIATED PROTEIN"/>
    <property type="match status" value="1"/>
</dbReference>
<dbReference type="PANTHER" id="PTHR11501:SF14">
    <property type="entry name" value="MICROTUBULE-ASSOCIATED PROTEIN TAU"/>
    <property type="match status" value="1"/>
</dbReference>
<dbReference type="Pfam" id="PF00418">
    <property type="entry name" value="Tubulin-binding"/>
    <property type="match status" value="4"/>
</dbReference>
<dbReference type="PRINTS" id="PR01261">
    <property type="entry name" value="TAUPROTEIN"/>
</dbReference>
<dbReference type="PROSITE" id="PS00229">
    <property type="entry name" value="TAU_MAP_1"/>
    <property type="match status" value="4"/>
</dbReference>
<dbReference type="PROSITE" id="PS51491">
    <property type="entry name" value="TAU_MAP_2"/>
    <property type="match status" value="4"/>
</dbReference>
<comment type="function">
    <text evidence="1">Promotes microtubule assembly and stability, and might be involved in the establishment and maintenance of neuronal polarity. The C-terminus binds axonal microtubules while the N-terminus binds neural plasma membrane components, suggesting that tau functions as a linker protein between both. Axonal polarity is predetermined by tau localization (in the neuronal cell) in the domain of the cell body defined by the centrosome. The short isoforms allow plasticity of the cytoskeleton whereas the longer isoforms may preferentially play a role in its stabilization (By similarity).</text>
</comment>
<comment type="subunit">
    <text evidence="2 3 4">Interacts with MARK1, MARK2, MARK3 and MARK4 (By similarity). Interacts with SQSTM1 when polyubiquitinated (By similarity). Interacts with PSMC2 through SQSTM1 (By similarity). Interacts with FKBP4 (By similarity). Binds to CSNK1D (By similarity). Interacts with SGK1 (By similarity). Interacts with EPM2A; the interaction dephosphorylates MAPT at Ser-396 (By similarity). Interacts with PIN1 (By similarity). Interacts with LRRK2 (By similarity). Interacts with LRP1, leading to endocytosis; this interaction is reduced in the presence of LRPAP1/RAP (By similarity).</text>
</comment>
<comment type="subcellular location">
    <subcellularLocation>
        <location evidence="2">Cytoplasm</location>
        <location evidence="2">Cytosol</location>
    </subcellularLocation>
    <subcellularLocation>
        <location evidence="2">Cell membrane</location>
        <topology evidence="2">Peripheral membrane protein</topology>
        <orientation evidence="2">Cytoplasmic side</orientation>
    </subcellularLocation>
    <subcellularLocation>
        <location evidence="2">Cytoplasm</location>
        <location evidence="2">Cytoskeleton</location>
    </subcellularLocation>
    <subcellularLocation>
        <location evidence="2">Cell projection</location>
        <location evidence="2">Axon</location>
    </subcellularLocation>
    <subcellularLocation>
        <location evidence="2">Cell projection</location>
        <location evidence="2">Dendrite</location>
    </subcellularLocation>
    <text evidence="2">Mostly found in the axons of neurons, in the cytosol and in association with plasma membrane components.</text>
</comment>
<comment type="domain">
    <text evidence="1">The tau/MAP repeat binds to tubulin.</text>
</comment>
<comment type="PTM">
    <text evidence="1">Polyubiquitinated. Requires functional TRAF6 and may provoke SQSTM1-dependent degradation by the proteasome (By similarity).</text>
</comment>
<comment type="PTM">
    <text evidence="1 2">Phosphorylation at various serine and threonine residues in S-P or T-P motifs by proline-directed protein kinases (PDPK1, CDK1, CDK5, GSK3, MAPK) (a few sites per protein in interphase, more in mitosis), and at serine residues in K-X-G-S motifs by MAP/microtubule affinity-regulating kinase (MARK1, MARK2, MARK3 or MARK4), causing detachment from microtubules, and their disassembly (By similarity). Phosphorylation at Ser-579 by BRSK1 and BRSK2 in neurons affects ability to bind microtubules and plays a role in neuron polarization. Phosphorylated by PHK. Dephosphorylation at several serine and threonine residues by the serine/threonine phosphatase PPP5C (By similarity). Phosphorylation at Ser-214 by SGK1 mediates microtubule depolymerization and neurite formation in hippocampal neurons (By similarity).</text>
</comment>
<evidence type="ECO:0000250" key="1"/>
<evidence type="ECO:0000250" key="2">
    <source>
        <dbReference type="UniProtKB" id="P10636"/>
    </source>
</evidence>
<evidence type="ECO:0000250" key="3">
    <source>
        <dbReference type="UniProtKB" id="P10637"/>
    </source>
</evidence>
<evidence type="ECO:0000250" key="4">
    <source>
        <dbReference type="UniProtKB" id="P19332"/>
    </source>
</evidence>
<evidence type="ECO:0000255" key="5">
    <source>
        <dbReference type="PROSITE-ProRule" id="PRU00824"/>
    </source>
</evidence>
<evidence type="ECO:0000256" key="6">
    <source>
        <dbReference type="SAM" id="MobiDB-lite"/>
    </source>
</evidence>
<gene>
    <name type="primary">MAPT</name>
</gene>
<keyword id="KW-0007">Acetylation</keyword>
<keyword id="KW-1003">Cell membrane</keyword>
<keyword id="KW-0966">Cell projection</keyword>
<keyword id="KW-0963">Cytoplasm</keyword>
<keyword id="KW-0206">Cytoskeleton</keyword>
<keyword id="KW-1017">Isopeptide bond</keyword>
<keyword id="KW-0472">Membrane</keyword>
<keyword id="KW-0488">Methylation</keyword>
<keyword id="KW-0493">Microtubule</keyword>
<keyword id="KW-0597">Phosphoprotein</keyword>
<keyword id="KW-0677">Repeat</keyword>
<keyword id="KW-0832">Ubl conjugation</keyword>
<protein>
    <recommendedName>
        <fullName>Microtubule-associated protein tau</fullName>
    </recommendedName>
</protein>
<organism>
    <name type="scientific">Pongo pygmaeus</name>
    <name type="common">Bornean orangutan</name>
    <dbReference type="NCBI Taxonomy" id="9600"/>
    <lineage>
        <taxon>Eukaryota</taxon>
        <taxon>Metazoa</taxon>
        <taxon>Chordata</taxon>
        <taxon>Craniata</taxon>
        <taxon>Vertebrata</taxon>
        <taxon>Euteleostomi</taxon>
        <taxon>Mammalia</taxon>
        <taxon>Eutheria</taxon>
        <taxon>Euarchontoglires</taxon>
        <taxon>Primates</taxon>
        <taxon>Haplorrhini</taxon>
        <taxon>Catarrhini</taxon>
        <taxon>Hominidae</taxon>
        <taxon>Pongo</taxon>
    </lineage>
</organism>
<accession>Q5S6V2</accession>
<feature type="initiator methionine" description="Removed" evidence="2">
    <location>
        <position position="1"/>
    </location>
</feature>
<feature type="chain" id="PRO_0000072745" description="Microtubule-associated protein tau">
    <location>
        <begin position="2"/>
        <end position="758"/>
    </location>
</feature>
<feature type="repeat" description="Tau/MAP 1" evidence="5">
    <location>
        <begin position="561"/>
        <end position="591"/>
    </location>
</feature>
<feature type="repeat" description="Tau/MAP 2" evidence="5">
    <location>
        <begin position="592"/>
        <end position="622"/>
    </location>
</feature>
<feature type="repeat" description="Tau/MAP 3" evidence="5">
    <location>
        <begin position="623"/>
        <end position="653"/>
    </location>
</feature>
<feature type="repeat" description="Tau/MAP 4" evidence="5">
    <location>
        <begin position="654"/>
        <end position="685"/>
    </location>
</feature>
<feature type="region of interest" description="Disordered" evidence="6">
    <location>
        <begin position="1"/>
        <end position="573"/>
    </location>
</feature>
<feature type="region of interest" description="Disordered" evidence="6">
    <location>
        <begin position="715"/>
        <end position="734"/>
    </location>
</feature>
<feature type="compositionally biased region" description="Basic and acidic residues" evidence="6">
    <location>
        <begin position="1"/>
        <end position="26"/>
    </location>
</feature>
<feature type="compositionally biased region" description="Polar residues" evidence="6">
    <location>
        <begin position="61"/>
        <end position="71"/>
    </location>
</feature>
<feature type="compositionally biased region" description="Basic and acidic residues" evidence="6">
    <location>
        <begin position="179"/>
        <end position="189"/>
    </location>
</feature>
<feature type="compositionally biased region" description="Basic and acidic residues" evidence="6">
    <location>
        <begin position="207"/>
        <end position="216"/>
    </location>
</feature>
<feature type="compositionally biased region" description="Acidic residues" evidence="6">
    <location>
        <begin position="217"/>
        <end position="228"/>
    </location>
</feature>
<feature type="compositionally biased region" description="Basic and acidic residues" evidence="6">
    <location>
        <begin position="314"/>
        <end position="323"/>
    </location>
</feature>
<feature type="compositionally biased region" description="Low complexity" evidence="6">
    <location>
        <begin position="325"/>
        <end position="340"/>
    </location>
</feature>
<feature type="compositionally biased region" description="Basic and acidic residues" evidence="6">
    <location>
        <begin position="344"/>
        <end position="356"/>
    </location>
</feature>
<feature type="compositionally biased region" description="Basic and acidic residues" evidence="6">
    <location>
        <begin position="381"/>
        <end position="393"/>
    </location>
</feature>
<feature type="compositionally biased region" description="Polar residues" evidence="6">
    <location>
        <begin position="440"/>
        <end position="452"/>
    </location>
</feature>
<feature type="compositionally biased region" description="Basic and acidic residues" evidence="6">
    <location>
        <begin position="455"/>
        <end position="466"/>
    </location>
</feature>
<feature type="compositionally biased region" description="Pro residues" evidence="6">
    <location>
        <begin position="491"/>
        <end position="503"/>
    </location>
</feature>
<feature type="compositionally biased region" description="Low complexity" evidence="6">
    <location>
        <begin position="504"/>
        <end position="531"/>
    </location>
</feature>
<feature type="compositionally biased region" description="Polar residues" evidence="6">
    <location>
        <begin position="718"/>
        <end position="733"/>
    </location>
</feature>
<feature type="modified residue" description="N-acetylalanine" evidence="2">
    <location>
        <position position="2"/>
    </location>
</feature>
<feature type="modified residue" description="Phosphotyrosine" evidence="2">
    <location>
        <position position="18"/>
    </location>
</feature>
<feature type="modified residue" description="Phosphotyrosine" evidence="3">
    <location>
        <position position="29"/>
    </location>
</feature>
<feature type="modified residue" description="Phosphoserine" evidence="4">
    <location>
        <position position="46"/>
    </location>
</feature>
<feature type="modified residue" description="Phosphoserine" evidence="4">
    <location>
        <position position="61"/>
    </location>
</feature>
<feature type="modified residue" description="Phosphothreonine" evidence="3">
    <location>
        <position position="69"/>
    </location>
</feature>
<feature type="modified residue" description="Phosphothreonine" evidence="4">
    <location>
        <position position="71"/>
    </location>
</feature>
<feature type="modified residue" description="Phosphothreonine" evidence="3">
    <location>
        <position position="111"/>
    </location>
</feature>
<feature type="modified residue" description="Phosphoserine" evidence="2">
    <location>
        <position position="214"/>
    </location>
</feature>
<feature type="modified residue" description="Phosphothreonine" evidence="2">
    <location>
        <position position="470"/>
    </location>
</feature>
<feature type="modified residue" description="Omega-N-methylarginine" evidence="3">
    <location>
        <position position="472"/>
    </location>
</feature>
<feature type="modified residue" description="N6,N6-dimethyllysine; alternate" evidence="3">
    <location>
        <position position="480"/>
    </location>
</feature>
<feature type="modified residue" description="N6-acetyllysine; alternate" evidence="3">
    <location>
        <position position="480"/>
    </location>
</feature>
<feature type="modified residue" description="Phosphothreonine" evidence="3">
    <location>
        <position position="486"/>
    </location>
</feature>
<feature type="modified residue" description="Phosphothreonine" evidence="3">
    <location>
        <position position="492"/>
    </location>
</feature>
<feature type="modified residue" description="Phosphothreonine" evidence="2">
    <location>
        <position position="498"/>
    </location>
</feature>
<feature type="modified residue" description="Phosphoserine" evidence="3">
    <location>
        <position position="502"/>
    </location>
</feature>
<feature type="modified residue" description="Phosphoserine" evidence="3">
    <location>
        <position position="508"/>
    </location>
</feature>
<feature type="modified residue" description="Phosphoserine" evidence="3">
    <location>
        <position position="512"/>
    </location>
</feature>
<feature type="modified residue" description="Phosphotyrosine" evidence="2">
    <location>
        <position position="514"/>
    </location>
</feature>
<feature type="modified residue" description="Phosphoserine" evidence="2">
    <location>
        <position position="515"/>
    </location>
</feature>
<feature type="modified residue" description="Phosphoserine" evidence="2">
    <location>
        <position position="516"/>
    </location>
</feature>
<feature type="modified residue" description="Phosphoserine" evidence="2">
    <location>
        <position position="519"/>
    </location>
</feature>
<feature type="modified residue" description="Phosphothreonine" evidence="2">
    <location>
        <position position="522"/>
    </location>
</feature>
<feature type="modified residue" description="Phosphothreonine" evidence="2">
    <location>
        <position position="529"/>
    </location>
</feature>
<feature type="modified residue" description="Phosphoserine" evidence="2">
    <location>
        <position position="531"/>
    </location>
</feature>
<feature type="modified residue" description="Phosphothreonine" evidence="2">
    <location>
        <position position="534"/>
    </location>
</feature>
<feature type="modified residue" description="N6-acetyllysine" evidence="3">
    <location>
        <position position="542"/>
    </location>
</feature>
<feature type="modified residue" description="Phosphothreonine" evidence="2">
    <location>
        <position position="548"/>
    </location>
</feature>
<feature type="modified residue" description="Phosphoserine" evidence="2">
    <location>
        <position position="552"/>
    </location>
</feature>
<feature type="modified residue" description="Phosphoserine" evidence="2">
    <location>
        <position position="554"/>
    </location>
</feature>
<feature type="modified residue" description="N6-acetyllysine; alternate" evidence="3">
    <location>
        <position position="576"/>
    </location>
</feature>
<feature type="modified residue" description="N6-methyllysine; alternate" evidence="3">
    <location>
        <position position="576"/>
    </location>
</feature>
<feature type="modified residue" description="Phosphoserine" evidence="2">
    <location>
        <position position="579"/>
    </location>
</feature>
<feature type="modified residue" description="N6-acetyllysine; alternate" evidence="3">
    <location>
        <position position="598"/>
    </location>
</feature>
<feature type="modified residue" description="Phosphoserine" evidence="2">
    <location>
        <position position="602"/>
    </location>
</feature>
<feature type="modified residue" description="Phosphoserine" evidence="2">
    <location>
        <position position="606"/>
    </location>
</feature>
<feature type="modified residue" description="N6-acetyllysine" evidence="3">
    <location>
        <position position="607"/>
    </location>
</feature>
<feature type="modified residue" description="Phosphoserine" evidence="2">
    <location>
        <position position="610"/>
    </location>
</feature>
<feature type="modified residue" description="N6-acetyllysine; alternate" evidence="3">
    <location>
        <position position="615"/>
    </location>
</feature>
<feature type="modified residue" description="Phosphoserine" evidence="2">
    <location>
        <position position="622"/>
    </location>
</feature>
<feature type="modified residue" description="N6,N6-dimethyllysine; alternate" evidence="3">
    <location>
        <position position="628"/>
    </location>
</feature>
<feature type="modified residue" description="N6-acetyllysine; alternate" evidence="3">
    <location>
        <position position="628"/>
    </location>
</feature>
<feature type="modified residue" description="N6-acetyllysine; alternate" evidence="3">
    <location>
        <position position="634"/>
    </location>
</feature>
<feature type="modified residue" description="N6-acetyllysine; alternate" evidence="3">
    <location>
        <position position="638"/>
    </location>
</feature>
<feature type="modified residue" description="Phosphoserine" evidence="2">
    <location>
        <position position="641"/>
    </location>
</feature>
<feature type="modified residue" description="N6-acetyllysine; alternate" evidence="3">
    <location>
        <position position="648"/>
    </location>
</feature>
<feature type="modified residue" description="N6-acetyllysine; alternate" evidence="3">
    <location>
        <position position="660"/>
    </location>
</feature>
<feature type="modified residue" description="N6-acetyllysine; alternate" evidence="3">
    <location>
        <position position="664"/>
    </location>
</feature>
<feature type="modified residue" description="Omega-N-methylarginine" evidence="3">
    <location>
        <position position="666"/>
    </location>
</feature>
<feature type="modified residue" description="Phosphoserine" evidence="2">
    <location>
        <position position="669"/>
    </location>
</feature>
<feature type="modified residue" description="Phosphoserine" evidence="2">
    <location>
        <position position="673"/>
    </location>
</feature>
<feature type="modified residue" description="N6-acetyllysine; alternate" evidence="3">
    <location>
        <position position="686"/>
    </location>
</feature>
<feature type="modified residue" description="N6-acetyllysine; alternate" evidence="3">
    <location>
        <position position="702"/>
    </location>
</feature>
<feature type="modified residue" description="Phosphotyrosine" evidence="3">
    <location>
        <position position="711"/>
    </location>
</feature>
<feature type="modified residue" description="Phosphoserine" evidence="2">
    <location>
        <position position="713"/>
    </location>
</feature>
<feature type="modified residue" description="Phosphoserine" evidence="2">
    <location>
        <position position="717"/>
    </location>
</feature>
<feature type="modified residue" description="Phosphothreonine" evidence="3">
    <location>
        <position position="720"/>
    </location>
</feature>
<feature type="modified residue" description="Phosphoserine" evidence="2">
    <location>
        <position position="721"/>
    </location>
</feature>
<feature type="modified residue" description="Phosphoserine" evidence="2">
    <location>
        <position position="726"/>
    </location>
</feature>
<feature type="modified residue" description="Phosphoserine" evidence="2">
    <location>
        <position position="733"/>
    </location>
</feature>
<feature type="modified residue" description="Phosphoserine" evidence="2">
    <location>
        <position position="739"/>
    </location>
</feature>
<feature type="modified residue" description="Phosphothreonine" evidence="2">
    <location>
        <position position="744"/>
    </location>
</feature>
<feature type="cross-link" description="Glycyl lysine isopeptide (Lys-Gly) (interchain with G-Cter in ubiquitin)" evidence="3">
    <location>
        <position position="44"/>
    </location>
</feature>
<feature type="cross-link" description="Glycyl lysine isopeptide (Lys-Gly) (interchain with G-Cter in ubiquitin)" evidence="2">
    <location>
        <position position="571"/>
    </location>
</feature>
<feature type="cross-link" description="Glycyl lysine isopeptide (Lys-Gly) (interchain with G-Cter in ubiquitin); alternate" evidence="3">
    <location>
        <position position="576"/>
    </location>
</feature>
<feature type="cross-link" description="Glycyl lysine isopeptide (Lys-Gly) (interchain with G-Cter in ubiquitin)" evidence="3">
    <location>
        <position position="584"/>
    </location>
</feature>
<feature type="cross-link" description="Glycyl lysine isopeptide (Lys-Gly) (interchain with G-Cter in ubiquitin); alternate" evidence="3">
    <location>
        <position position="598"/>
    </location>
</feature>
<feature type="cross-link" description="Glycyl lysine isopeptide (Lys-Gly) (interchain with G-Cter in ubiquitin); alternate" evidence="3">
    <location>
        <position position="615"/>
    </location>
</feature>
<feature type="cross-link" description="Glycyl lysine isopeptide (Lys-Gly) (interchain with G-Cter in ubiquitin); alternate" evidence="2">
    <location>
        <position position="628"/>
    </location>
</feature>
<feature type="cross-link" description="Glycyl lysine isopeptide (Lys-Gly) (interchain with G-Cter in ubiquitin); alternate" evidence="3">
    <location>
        <position position="634"/>
    </location>
</feature>
<feature type="cross-link" description="Glycyl lysine isopeptide (Lys-Gly) (interchain with G-Cter in ubiquitin); alternate" evidence="3">
    <location>
        <position position="638"/>
    </location>
</feature>
<feature type="cross-link" description="Glycyl lysine isopeptide (Lys-Gly) (interchain with G-Cter in ubiquitin); alternate" evidence="3">
    <location>
        <position position="648"/>
    </location>
</feature>
<feature type="cross-link" description="Glycyl lysine isopeptide (Lys-Gly) (interchain with G-Cter in ubiquitin); alternate" evidence="3">
    <location>
        <position position="660"/>
    </location>
</feature>
<feature type="cross-link" description="Glycyl lysine isopeptide (Lys-Gly) (interchain with G-Cter in ubiquitin); alternate" evidence="3">
    <location>
        <position position="664"/>
    </location>
</feature>
<feature type="cross-link" description="Glycyl lysine isopeptide (Lys-Gly) (interchain with G-Cter in ubiquitin)" evidence="2">
    <location>
        <position position="670"/>
    </location>
</feature>
<feature type="cross-link" description="Glycyl lysine isopeptide (Lys-Gly) (interchain with G-Cter in ubiquitin); alternate" evidence="3">
    <location>
        <position position="686"/>
    </location>
</feature>
<feature type="cross-link" description="Glycyl lysine isopeptide (Lys-Gly) (interchain with G-Cter in ubiquitin)" evidence="3">
    <location>
        <position position="692"/>
    </location>
</feature>
<feature type="cross-link" description="Glycyl lysine isopeptide (Lys-Gly) (interchain with G-Cter in ubiquitin); alternate" evidence="3">
    <location>
        <position position="702"/>
    </location>
</feature>
<proteinExistence type="inferred from homology"/>